<name>CAVN1_MOUSE</name>
<organism>
    <name type="scientific">Mus musculus</name>
    <name type="common">Mouse</name>
    <dbReference type="NCBI Taxonomy" id="10090"/>
    <lineage>
        <taxon>Eukaryota</taxon>
        <taxon>Metazoa</taxon>
        <taxon>Chordata</taxon>
        <taxon>Craniata</taxon>
        <taxon>Vertebrata</taxon>
        <taxon>Euteleostomi</taxon>
        <taxon>Mammalia</taxon>
        <taxon>Eutheria</taxon>
        <taxon>Euarchontoglires</taxon>
        <taxon>Glires</taxon>
        <taxon>Rodentia</taxon>
        <taxon>Myomorpha</taxon>
        <taxon>Muroidea</taxon>
        <taxon>Muridae</taxon>
        <taxon>Murinae</taxon>
        <taxon>Mus</taxon>
        <taxon>Mus</taxon>
    </lineage>
</organism>
<sequence>MEDVTLHIVERPYSGFPDASSEGPEPTQGEARATEEPSGTGSDELIKSDQVNGVLVLSLLDKIIGAVDQIQLTQAQLEERQAEMEGAVQSIQGELSKLGKAHATTSNTVSKLLEKVRKVSVNVKTVRGSLERQAGQIKKLEVNEAELLRRRNFKVMIYQDEVKLPAKLSVSKSLKESEALPEKEGDELGEGERPEDDTAAIELSSDEAVEVEEVIEESRAERIKRSGLRRVDDFKKAFSKEKMEKTKVRTRENLEKTRLKTKENLEKTRHTLEKRMNKLGTRLVPVERREKLKTSRDKLRKSFTPDHVVYARSKTAVYKVPPFTFHVKKIREGEVEVLKATEMVEVGPEDDEVGAERGEATDLLRGSSPDVHTLLEITEESDAVLVDKSDSD</sequence>
<dbReference type="EMBL" id="AF036249">
    <property type="protein sequence ID" value="AAC53588.1"/>
    <property type="molecule type" value="mRNA"/>
</dbReference>
<dbReference type="EMBL" id="AF458959">
    <property type="protein sequence ID" value="AAL60240.1"/>
    <property type="molecule type" value="Genomic_DNA"/>
</dbReference>
<dbReference type="EMBL" id="AL591466">
    <property type="status" value="NOT_ANNOTATED_CDS"/>
    <property type="molecule type" value="Genomic_DNA"/>
</dbReference>
<dbReference type="EMBL" id="BC110698">
    <property type="protein sequence ID" value="AAI10699.1"/>
    <property type="molecule type" value="mRNA"/>
</dbReference>
<dbReference type="EMBL" id="BC117527">
    <property type="protein sequence ID" value="AAI17528.1"/>
    <property type="molecule type" value="mRNA"/>
</dbReference>
<dbReference type="EMBL" id="BC116701">
    <property type="protein sequence ID" value="AAI16702.1"/>
    <property type="molecule type" value="mRNA"/>
</dbReference>
<dbReference type="CCDS" id="CCDS25442.1"/>
<dbReference type="RefSeq" id="NP_033012.1">
    <property type="nucleotide sequence ID" value="NM_008986.2"/>
</dbReference>
<dbReference type="PDB" id="4QKV">
    <property type="method" value="X-ray"/>
    <property type="resolution" value="3.00 A"/>
    <property type="chains" value="A/B/C=45-155"/>
</dbReference>
<dbReference type="PDBsum" id="4QKV"/>
<dbReference type="SMR" id="O54724"/>
<dbReference type="BioGRID" id="202511">
    <property type="interactions" value="39"/>
</dbReference>
<dbReference type="DIP" id="DIP-40506N"/>
<dbReference type="FunCoup" id="O54724">
    <property type="interactions" value="492"/>
</dbReference>
<dbReference type="IntAct" id="O54724">
    <property type="interactions" value="12"/>
</dbReference>
<dbReference type="MINT" id="O54724"/>
<dbReference type="STRING" id="10090.ENSMUSP00000058321"/>
<dbReference type="GlyGen" id="O54724">
    <property type="glycosylation" value="2 sites, 1 O-linked glycan (1 site)"/>
</dbReference>
<dbReference type="iPTMnet" id="O54724"/>
<dbReference type="PhosphoSitePlus" id="O54724"/>
<dbReference type="jPOST" id="O54724"/>
<dbReference type="PaxDb" id="10090-ENSMUSP00000058321"/>
<dbReference type="PeptideAtlas" id="O54724"/>
<dbReference type="ProteomicsDB" id="265670"/>
<dbReference type="Pumba" id="O54724"/>
<dbReference type="Antibodypedia" id="29228">
    <property type="antibodies" value="235 antibodies from 34 providers"/>
</dbReference>
<dbReference type="DNASU" id="19285"/>
<dbReference type="Ensembl" id="ENSMUST00000060792.6">
    <property type="protein sequence ID" value="ENSMUSP00000058321.6"/>
    <property type="gene ID" value="ENSMUSG00000004044.10"/>
</dbReference>
<dbReference type="GeneID" id="19285"/>
<dbReference type="KEGG" id="mmu:19285"/>
<dbReference type="UCSC" id="uc007lmr.2">
    <property type="organism name" value="mouse"/>
</dbReference>
<dbReference type="AGR" id="MGI:1277968"/>
<dbReference type="CTD" id="284119"/>
<dbReference type="MGI" id="MGI:1277968">
    <property type="gene designation" value="Cavin1"/>
</dbReference>
<dbReference type="VEuPathDB" id="HostDB:ENSMUSG00000004044"/>
<dbReference type="eggNOG" id="ENOG502QV3D">
    <property type="taxonomic scope" value="Eukaryota"/>
</dbReference>
<dbReference type="GeneTree" id="ENSGT00950000182910"/>
<dbReference type="HOGENOM" id="CLU_039470_0_0_1"/>
<dbReference type="InParanoid" id="O54724"/>
<dbReference type="OMA" id="IGTHISV"/>
<dbReference type="OrthoDB" id="8951679at2759"/>
<dbReference type="PhylomeDB" id="O54724"/>
<dbReference type="TreeFam" id="TF331031"/>
<dbReference type="Reactome" id="R-MMU-73863">
    <property type="pathway name" value="RNA Polymerase I Transcription Termination"/>
</dbReference>
<dbReference type="Reactome" id="R-MMU-8980692">
    <property type="pathway name" value="RHOA GTPase cycle"/>
</dbReference>
<dbReference type="Reactome" id="R-MMU-9013026">
    <property type="pathway name" value="RHOB GTPase cycle"/>
</dbReference>
<dbReference type="Reactome" id="R-MMU-9013106">
    <property type="pathway name" value="RHOC GTPase cycle"/>
</dbReference>
<dbReference type="BioGRID-ORCS" id="19285">
    <property type="hits" value="2 hits in 80 CRISPR screens"/>
</dbReference>
<dbReference type="ChiTaRS" id="Ptrf">
    <property type="organism name" value="mouse"/>
</dbReference>
<dbReference type="EvolutionaryTrace" id="O54724"/>
<dbReference type="PRO" id="PR:O54724"/>
<dbReference type="Proteomes" id="UP000000589">
    <property type="component" value="Chromosome 11"/>
</dbReference>
<dbReference type="RNAct" id="O54724">
    <property type="molecule type" value="protein"/>
</dbReference>
<dbReference type="Bgee" id="ENSMUSG00000004044">
    <property type="expression patterns" value="Expressed in thoracic mammary gland and 226 other cell types or tissues"/>
</dbReference>
<dbReference type="GO" id="GO:0005901">
    <property type="term" value="C:caveola"/>
    <property type="evidence" value="ECO:0000314"/>
    <property type="project" value="UniProtKB"/>
</dbReference>
<dbReference type="GO" id="GO:0005737">
    <property type="term" value="C:cytoplasm"/>
    <property type="evidence" value="ECO:0000250"/>
    <property type="project" value="UniProtKB"/>
</dbReference>
<dbReference type="GO" id="GO:0005829">
    <property type="term" value="C:cytosol"/>
    <property type="evidence" value="ECO:0007669"/>
    <property type="project" value="UniProtKB-SubCell"/>
</dbReference>
<dbReference type="GO" id="GO:0005783">
    <property type="term" value="C:endoplasmic reticulum"/>
    <property type="evidence" value="ECO:0000314"/>
    <property type="project" value="UniProtKB"/>
</dbReference>
<dbReference type="GO" id="GO:0005739">
    <property type="term" value="C:mitochondrion"/>
    <property type="evidence" value="ECO:0000250"/>
    <property type="project" value="UniProtKB"/>
</dbReference>
<dbReference type="GO" id="GO:0005634">
    <property type="term" value="C:nucleus"/>
    <property type="evidence" value="ECO:0000314"/>
    <property type="project" value="UniProtKB"/>
</dbReference>
<dbReference type="GO" id="GO:0032991">
    <property type="term" value="C:protein-containing complex"/>
    <property type="evidence" value="ECO:0000266"/>
    <property type="project" value="MGI"/>
</dbReference>
<dbReference type="GO" id="GO:0042802">
    <property type="term" value="F:identical protein binding"/>
    <property type="evidence" value="ECO:0007669"/>
    <property type="project" value="Ensembl"/>
</dbReference>
<dbReference type="GO" id="GO:0042134">
    <property type="term" value="F:rRNA primary transcript binding"/>
    <property type="evidence" value="ECO:0000314"/>
    <property type="project" value="UniProtKB"/>
</dbReference>
<dbReference type="GO" id="GO:2000147">
    <property type="term" value="P:positive regulation of cell motility"/>
    <property type="evidence" value="ECO:0000315"/>
    <property type="project" value="UniProtKB"/>
</dbReference>
<dbReference type="GO" id="GO:0009306">
    <property type="term" value="P:protein secretion"/>
    <property type="evidence" value="ECO:0000315"/>
    <property type="project" value="UniProtKB"/>
</dbReference>
<dbReference type="GO" id="GO:0009303">
    <property type="term" value="P:rRNA transcription"/>
    <property type="evidence" value="ECO:0000315"/>
    <property type="project" value="UniProtKB"/>
</dbReference>
<dbReference type="GO" id="GO:0006363">
    <property type="term" value="P:termination of RNA polymerase I transcription"/>
    <property type="evidence" value="ECO:0000314"/>
    <property type="project" value="UniProtKB"/>
</dbReference>
<dbReference type="GO" id="GO:0006361">
    <property type="term" value="P:transcription initiation at RNA polymerase I promoter"/>
    <property type="evidence" value="ECO:0000314"/>
    <property type="project" value="UniProtKB"/>
</dbReference>
<dbReference type="InterPro" id="IPR026752">
    <property type="entry name" value="Cavin_fam"/>
</dbReference>
<dbReference type="PANTHER" id="PTHR15240:SF3">
    <property type="entry name" value="CAVEOLAE-ASSOCIATED PROTEIN 1"/>
    <property type="match status" value="1"/>
</dbReference>
<dbReference type="PANTHER" id="PTHR15240">
    <property type="entry name" value="CAVIN"/>
    <property type="match status" value="1"/>
</dbReference>
<dbReference type="Pfam" id="PF15237">
    <property type="entry name" value="PTRF_SDPR"/>
    <property type="match status" value="1"/>
</dbReference>
<evidence type="ECO:0000250" key="1">
    <source>
        <dbReference type="UniProtKB" id="P85125"/>
    </source>
</evidence>
<evidence type="ECO:0000250" key="2">
    <source>
        <dbReference type="UniProtKB" id="Q6NZI2"/>
    </source>
</evidence>
<evidence type="ECO:0000255" key="3"/>
<evidence type="ECO:0000256" key="4">
    <source>
        <dbReference type="SAM" id="MobiDB-lite"/>
    </source>
</evidence>
<evidence type="ECO:0000269" key="5">
    <source>
    </source>
</evidence>
<evidence type="ECO:0000269" key="6">
    <source>
    </source>
</evidence>
<evidence type="ECO:0000269" key="7">
    <source>
    </source>
</evidence>
<evidence type="ECO:0000269" key="8">
    <source>
    </source>
</evidence>
<evidence type="ECO:0000269" key="9">
    <source>
    </source>
</evidence>
<evidence type="ECO:0000269" key="10">
    <source>
    </source>
</evidence>
<evidence type="ECO:0000269" key="11">
    <source>
    </source>
</evidence>
<evidence type="ECO:0000269" key="12">
    <source>
    </source>
</evidence>
<evidence type="ECO:0000269" key="13">
    <source>
    </source>
</evidence>
<evidence type="ECO:0000269" key="14">
    <source>
    </source>
</evidence>
<evidence type="ECO:0000269" key="15">
    <source>
    </source>
</evidence>
<evidence type="ECO:0000269" key="16">
    <source>
    </source>
</evidence>
<evidence type="ECO:0000269" key="17">
    <source>
    </source>
</evidence>
<evidence type="ECO:0000269" key="18">
    <source>
    </source>
</evidence>
<evidence type="ECO:0000269" key="19">
    <source>
    </source>
</evidence>
<evidence type="ECO:0000305" key="20"/>
<evidence type="ECO:0000305" key="21">
    <source>
    </source>
</evidence>
<evidence type="ECO:0000312" key="22">
    <source>
        <dbReference type="EMBL" id="AAC53588.1"/>
    </source>
</evidence>
<evidence type="ECO:0000312" key="23">
    <source>
        <dbReference type="EMBL" id="AAL60240.1"/>
    </source>
</evidence>
<evidence type="ECO:0000312" key="24">
    <source>
        <dbReference type="MGI" id="MGI:1277968"/>
    </source>
</evidence>
<evidence type="ECO:0007744" key="25">
    <source>
    </source>
</evidence>
<evidence type="ECO:0007744" key="26">
    <source>
    </source>
</evidence>
<evidence type="ECO:0007744" key="27">
    <source>
    </source>
</evidence>
<evidence type="ECO:0007744" key="28">
    <source>
    </source>
</evidence>
<evidence type="ECO:0007829" key="29">
    <source>
        <dbReference type="PDB" id="4QKV"/>
    </source>
</evidence>
<accession>O54724</accession>
<accession>Q2TAW6</accession>
<feature type="chain" id="PRO_0000097095" description="Caveolae-associated protein 1">
    <location>
        <begin position="1"/>
        <end position="392"/>
    </location>
</feature>
<feature type="region of interest" description="Required for homotrimerization and for interaction with CAVIN2 and CAVIN3" evidence="16">
    <location>
        <begin position="1"/>
        <end position="100"/>
    </location>
</feature>
<feature type="region of interest" description="Disordered" evidence="4">
    <location>
        <begin position="1"/>
        <end position="45"/>
    </location>
</feature>
<feature type="region of interest" description="Nuclear export signal" evidence="17">
    <location>
        <begin position="54"/>
        <end position="64"/>
    </location>
</feature>
<feature type="region of interest" description="Leucine-zipper 1" evidence="15">
    <location>
        <begin position="55"/>
        <end position="77"/>
    </location>
</feature>
<feature type="region of interest" description="Nuclear localization signal" evidence="21">
    <location>
        <begin position="138"/>
        <end position="154"/>
    </location>
</feature>
<feature type="region of interest" description="Leucine-zipper 2" evidence="21">
    <location>
        <begin position="168"/>
        <end position="188"/>
    </location>
</feature>
<feature type="region of interest" description="Disordered" evidence="4">
    <location>
        <begin position="173"/>
        <end position="197"/>
    </location>
</feature>
<feature type="region of interest" description="Nuclear localization signal" evidence="21">
    <location>
        <begin position="235"/>
        <end position="251"/>
    </location>
</feature>
<feature type="region of interest" description="Leucine-zipper 3" evidence="21">
    <location>
        <begin position="259"/>
        <end position="299"/>
    </location>
</feature>
<feature type="region of interest" description="Disordered" evidence="4">
    <location>
        <begin position="347"/>
        <end position="367"/>
    </location>
</feature>
<feature type="coiled-coil region" evidence="3">
    <location>
        <begin position="201"/>
        <end position="284"/>
    </location>
</feature>
<feature type="compositionally biased region" description="Basic and acidic residues" evidence="4">
    <location>
        <begin position="1"/>
        <end position="10"/>
    </location>
</feature>
<feature type="compositionally biased region" description="Basic and acidic residues" evidence="4">
    <location>
        <begin position="173"/>
        <end position="183"/>
    </location>
</feature>
<feature type="compositionally biased region" description="Acidic residues" evidence="4">
    <location>
        <begin position="184"/>
        <end position="197"/>
    </location>
</feature>
<feature type="modified residue" description="N-acetylmethionine" evidence="2">
    <location>
        <position position="1"/>
    </location>
</feature>
<feature type="modified residue" description="Phosphoserine" evidence="1">
    <location>
        <position position="21"/>
    </location>
</feature>
<feature type="modified residue" description="Phosphoserine" evidence="28">
    <location>
        <position position="38"/>
    </location>
</feature>
<feature type="modified residue" description="Phosphothreonine" evidence="28">
    <location>
        <position position="40"/>
    </location>
</feature>
<feature type="modified residue" description="Phosphoserine" evidence="26 28">
    <location>
        <position position="42"/>
    </location>
</feature>
<feature type="modified residue" description="Phosphoserine" evidence="1">
    <location>
        <position position="48"/>
    </location>
</feature>
<feature type="modified residue" description="Phosphoserine" evidence="2">
    <location>
        <position position="120"/>
    </location>
</feature>
<feature type="modified residue" description="Phosphotyrosine" evidence="17">
    <location>
        <position position="158"/>
    </location>
</feature>
<feature type="modified residue" description="Phosphoserine" evidence="27 28">
    <location>
        <position position="169"/>
    </location>
</feature>
<feature type="modified residue" description="Phosphoserine" evidence="28">
    <location>
        <position position="171"/>
    </location>
</feature>
<feature type="modified residue" description="Phosphoserine" evidence="28">
    <location>
        <position position="173"/>
    </location>
</feature>
<feature type="modified residue" description="Phosphoserine" evidence="1">
    <location>
        <position position="177"/>
    </location>
</feature>
<feature type="modified residue" description="Phosphothreonine" evidence="28">
    <location>
        <position position="198"/>
    </location>
</feature>
<feature type="modified residue" description="Phosphoserine" evidence="28">
    <location>
        <position position="204"/>
    </location>
</feature>
<feature type="modified residue" description="Phosphoserine" evidence="28">
    <location>
        <position position="205"/>
    </location>
</feature>
<feature type="modified residue" description="Phosphoserine" evidence="27">
    <location>
        <position position="302"/>
    </location>
</feature>
<feature type="modified residue" description="Phosphothreonine" evidence="2">
    <location>
        <position position="304"/>
    </location>
</feature>
<feature type="modified residue" description="Phosphotyrosine" evidence="25 28">
    <location>
        <position position="310"/>
    </location>
</feature>
<feature type="modified residue" description="Phosphoserine" evidence="2">
    <location>
        <position position="367"/>
    </location>
</feature>
<feature type="modified residue" description="Phosphoserine" evidence="2">
    <location>
        <position position="368"/>
    </location>
</feature>
<feature type="modified residue" description="Phosphoserine" evidence="2">
    <location>
        <position position="381"/>
    </location>
</feature>
<feature type="modified residue" description="Phosphoserine" evidence="15">
    <location>
        <position position="389"/>
    </location>
</feature>
<feature type="modified residue" description="Phosphoserine" evidence="15 28">
    <location>
        <position position="391"/>
    </location>
</feature>
<feature type="cross-link" description="Glycyl lysine isopeptide (Lys-Gly) (interchain with G-Cter in SUMO2)" evidence="2">
    <location>
        <position position="118"/>
    </location>
</feature>
<feature type="cross-link" description="Glycyl lysine isopeptide (Lys-Gly) (interchain with G-Cter in SUMO2)" evidence="2">
    <location>
        <position position="124"/>
    </location>
</feature>
<feature type="cross-link" description="Glycyl lysine isopeptide (Lys-Gly) (interchain with G-Cter in SUMO1); alternate" evidence="2">
    <location>
        <position position="163"/>
    </location>
</feature>
<feature type="cross-link" description="Glycyl lysine isopeptide (Lys-Gly) (interchain with G-Cter in SUMO2); alternate" evidence="2">
    <location>
        <position position="163"/>
    </location>
</feature>
<feature type="cross-link" description="Glycyl lysine isopeptide (Lys-Gly) (interchain with G-Cter in SUMO2)" evidence="2">
    <location>
        <position position="167"/>
    </location>
</feature>
<feature type="cross-link" description="Glycyl lysine isopeptide (Lys-Gly) (interchain with G-Cter in SUMO2)" evidence="2">
    <location>
        <position position="172"/>
    </location>
</feature>
<feature type="cross-link" description="Glycyl lysine isopeptide (Lys-Gly) (interchain with G-Cter in SUMO2)" evidence="2">
    <location>
        <position position="328"/>
    </location>
</feature>
<feature type="mutagenesis site" description="Significant loss of phosphorylation and loss of regulation of ribosomal transcriptional activity." evidence="17">
    <original>Y</original>
    <variation>F</variation>
    <location>
        <position position="158"/>
    </location>
</feature>
<feature type="mutagenesis site" description="Loss of phosphorylation." evidence="15">
    <original>S</original>
    <variation>A</variation>
    <location>
        <position position="389"/>
    </location>
</feature>
<feature type="mutagenesis site" description="Loss of phosphorylation." evidence="15">
    <original>S</original>
    <variation>A</variation>
    <location>
        <position position="391"/>
    </location>
</feature>
<feature type="helix" evidence="29">
    <location>
        <begin position="49"/>
        <end position="116"/>
    </location>
</feature>
<feature type="helix" evidence="29">
    <location>
        <begin position="119"/>
        <end position="144"/>
    </location>
</feature>
<proteinExistence type="evidence at protein level"/>
<protein>
    <recommendedName>
        <fullName>Caveolae-associated protein 1</fullName>
    </recommendedName>
    <alternativeName>
        <fullName>Cav-p60</fullName>
    </alternativeName>
    <alternativeName>
        <fullName>Cavin-1</fullName>
    </alternativeName>
    <alternativeName>
        <fullName>Polymerase I and transcript release factor</fullName>
    </alternativeName>
</protein>
<keyword id="KW-0002">3D-structure</keyword>
<keyword id="KW-0007">Acetylation</keyword>
<keyword id="KW-1003">Cell membrane</keyword>
<keyword id="KW-0175">Coiled coil</keyword>
<keyword id="KW-0963">Cytoplasm</keyword>
<keyword id="KW-0256">Endoplasmic reticulum</keyword>
<keyword id="KW-1017">Isopeptide bond</keyword>
<keyword id="KW-0472">Membrane</keyword>
<keyword id="KW-0492">Microsome</keyword>
<keyword id="KW-0496">Mitochondrion</keyword>
<keyword id="KW-0539">Nucleus</keyword>
<keyword id="KW-0597">Phosphoprotein</keyword>
<keyword id="KW-1185">Reference proteome</keyword>
<keyword id="KW-0677">Repeat</keyword>
<keyword id="KW-0694">RNA-binding</keyword>
<keyword id="KW-0699">rRNA-binding</keyword>
<keyword id="KW-0804">Transcription</keyword>
<keyword id="KW-0805">Transcription regulation</keyword>
<keyword id="KW-0806">Transcription termination</keyword>
<keyword id="KW-0832">Ubl conjugation</keyword>
<gene>
    <name type="primary">Cavin1</name>
    <name evidence="24" type="synonym">Ptrf</name>
</gene>
<comment type="function">
    <text evidence="5 7 10 11 12 13 14 17 18 19">Plays an important role in caveolae formation and organization. Essential for the formation of caveolae in all tissues (PubMed:18056712, PubMed:18191225, PubMed:18840361, PubMed:30188967). Core component of the CAVIN complex which is essential for recruitment of the complex to the caveolae in presence of calveolin-1 (CAV1) (PubMed:19546242). Essential for normal oligomerization of CAV1 (PubMed:23652019). Promotes ribosomal transcriptional activity in response to metabolic challenges in the adipocytes and plays an important role in the formation of the ribosomal transcriptional loop (PubMed:27528195). Dissociates transcription complexes paused by DNA-bound TTF1, thereby releasing both RNA polymerase I and pre-RNA from the template (PubMed:10589839, PubMed:11139612, PubMed:9582279). The caveolae biogenesis pathway is required for the secretion of proteins such as GASK1A (PubMed:30188967).</text>
</comment>
<comment type="subunit">
    <text evidence="2 5 6 13 16 17 19">Component of the CAVIN complex composed of CAVIN1, CAVIN2, CAVIN3 and CAVIN4 (PubMed:19546242). Homotrimer (PubMed:25588833). Interacts with LIPE in the adipocyte cytoplasm (By similarity). Interacts with RNA polymerase I subunit POLR1A/RPA1 (PubMed:10589839, PubMed:9582279). Interacts with TTF1 (PubMed:10589839, PubMed:27528195, PubMed:9582279). Binds the 3' end of pre-rRNA (PubMed:9582279). Interacts with transcription factor ZNF148 (PubMed:10727401). Interacts with CAV1, CAVIN2 and CAVIN3 (PubMed:19546242, PubMed:25588833). Interacts with CAVIN4 (PubMed:19546242).</text>
</comment>
<comment type="subcellular location">
    <subcellularLocation>
        <location evidence="10 11 13 15">Membrane</location>
        <location evidence="10 11 13 15">Caveola</location>
    </subcellularLocation>
    <subcellularLocation>
        <location evidence="10 11">Cell membrane</location>
    </subcellularLocation>
    <subcellularLocation>
        <location evidence="2">Microsome</location>
    </subcellularLocation>
    <subcellularLocation>
        <location evidence="18">Endoplasmic reticulum</location>
    </subcellularLocation>
    <subcellularLocation>
        <location evidence="11 13">Cytoplasm</location>
        <location evidence="11 13">Cytosol</location>
    </subcellularLocation>
    <subcellularLocation>
        <location evidence="2">Mitochondrion</location>
    </subcellularLocation>
    <subcellularLocation>
        <location evidence="15 17">Nucleus</location>
    </subcellularLocation>
    <text evidence="2 10 13">Translocates to the cytoplasm from caveolae upon insulin stimulation (By similarity). Colocalizes with CAV1 in lipid rafts in adipocytes (PubMed:18056712). Localizes in the caveolae in a caveolin-dependent manner (PubMed:19546242).</text>
</comment>
<comment type="tissue specificity">
    <text evidence="8 11 13">Expressed in the heart, stomach, adipose tissue and lung (at protein level). Expressed in testis, kidney, muscle, liver, spleen and brain.</text>
</comment>
<comment type="domain">
    <text evidence="15">The leucine-zipper domain 1 is essential for its localization in the caveolae.</text>
</comment>
<comment type="PTM">
    <text evidence="7 17">Phosphorylated. Present in active and inactive forms. Changes in phosphorylation pattern may alter activity. Phosphorylation at Tyr-158 is essential for its function in the regulation of the ribosomal transcriptional activity.</text>
</comment>
<comment type="PTM">
    <text evidence="17">Monoubiquitinated.</text>
</comment>
<comment type="disruption phenotype">
    <text evidence="12">Mice show a metabolic phenotype of significantly reduced adipose tissue mass, higher circulating triglyceride levels, glucose intolerance, and hyperinsulinemia, consistent with a lipodystrophy. Cells from various tissues, including lung epithelium, intestinal smooth muscle, skeletal muscle, and endothelial cells showed no detectable caveolae cells.</text>
</comment>
<comment type="similarity">
    <text evidence="20">Belongs to the CAVIN family.</text>
</comment>
<reference evidence="20 22" key="1">
    <citation type="journal article" date="1998" name="EMBO J.">
        <title>Cloning and functional characterization of PTRF, a novel protein which induces dissociation of paused ternary transcription complexes.</title>
        <authorList>
            <person name="Jansa P."/>
            <person name="Mason S.W."/>
            <person name="Hoffmann-Rohrer U."/>
            <person name="Grummt I."/>
        </authorList>
    </citation>
    <scope>NUCLEOTIDE SEQUENCE [MRNA]</scope>
    <scope>FUNCTION</scope>
    <scope>INTERACTION WITH TTF1 AND RNA POLYMERASE I</scope>
</reference>
<reference evidence="20 23" key="2">
    <citation type="journal article" date="2001" name="Genomics">
        <title>Structure of the mouse Stat 3/5 locus: evolution from Drosophila to zebrafish to mouse.</title>
        <authorList>
            <person name="Miyoshi K."/>
            <person name="Cui Y."/>
            <person name="Riedlinger G."/>
            <person name="Robinson P."/>
            <person name="Lehoczky J."/>
            <person name="Zon L."/>
            <person name="Oka T."/>
            <person name="Dewar K."/>
            <person name="Hennighausen L."/>
        </authorList>
    </citation>
    <scope>NUCLEOTIDE SEQUENCE [GENOMIC DNA]</scope>
    <scope>TISSUE SPECIFICITY</scope>
    <source>
        <strain evidence="23">129/SvJ</strain>
    </source>
</reference>
<reference key="3">
    <citation type="journal article" date="2009" name="PLoS Biol.">
        <title>Lineage-specific biology revealed by a finished genome assembly of the mouse.</title>
        <authorList>
            <person name="Church D.M."/>
            <person name="Goodstadt L."/>
            <person name="Hillier L.W."/>
            <person name="Zody M.C."/>
            <person name="Goldstein S."/>
            <person name="She X."/>
            <person name="Bult C.J."/>
            <person name="Agarwala R."/>
            <person name="Cherry J.L."/>
            <person name="DiCuccio M."/>
            <person name="Hlavina W."/>
            <person name="Kapustin Y."/>
            <person name="Meric P."/>
            <person name="Maglott D."/>
            <person name="Birtle Z."/>
            <person name="Marques A.C."/>
            <person name="Graves T."/>
            <person name="Zhou S."/>
            <person name="Teague B."/>
            <person name="Potamousis K."/>
            <person name="Churas C."/>
            <person name="Place M."/>
            <person name="Herschleb J."/>
            <person name="Runnheim R."/>
            <person name="Forrest D."/>
            <person name="Amos-Landgraf J."/>
            <person name="Schwartz D.C."/>
            <person name="Cheng Z."/>
            <person name="Lindblad-Toh K."/>
            <person name="Eichler E.E."/>
            <person name="Ponting C.P."/>
        </authorList>
    </citation>
    <scope>NUCLEOTIDE SEQUENCE [LARGE SCALE GENOMIC DNA]</scope>
    <source>
        <strain>C57BL/6J</strain>
    </source>
</reference>
<reference evidence="20" key="4">
    <citation type="journal article" date="2004" name="Genome Res.">
        <title>The status, quality, and expansion of the NIH full-length cDNA project: the Mammalian Gene Collection (MGC).</title>
        <authorList>
            <consortium name="The MGC Project Team"/>
        </authorList>
    </citation>
    <scope>NUCLEOTIDE SEQUENCE [LARGE SCALE MRNA]</scope>
    <source>
        <strain evidence="9">C57BL/6J</strain>
        <tissue evidence="9">Eye</tissue>
    </source>
</reference>
<reference key="5">
    <citation type="journal article" date="1999" name="Mol. Gen. Genet.">
        <title>Mechanism of transcription termination: PTRF interacts with the largest subunit of RNA polymerase I and dissociates paused transcription complexes from yeast and mouse.</title>
        <authorList>
            <person name="Jansa P."/>
            <person name="Grummt I."/>
        </authorList>
    </citation>
    <scope>FUNCTION</scope>
    <scope>SUBUNIT</scope>
</reference>
<reference evidence="20" key="6">
    <citation type="journal article" date="2000" name="Biochem. J.">
        <title>PTRF (polymerase I and transcript-release factor) is tissue-specific and interacts with the BFCOL1 (binding factor of a type-I collagen promoter) zinc-finger transcription factor which binds to the two mouse type-I collagen gene promoters.</title>
        <authorList>
            <person name="Hasegawa T."/>
            <person name="Takeuchi A."/>
            <person name="Miyaishi O."/>
            <person name="Xiao H."/>
            <person name="Mao J."/>
            <person name="Isobe K."/>
        </authorList>
    </citation>
    <scope>INTERACTION WITH ZNF148</scope>
</reference>
<reference evidence="20" key="7">
    <citation type="journal article" date="2001" name="Nucleic Acids Res.">
        <title>The transcript release factor PTRF augments ribosomal gene transcription by facilitating reinitiation of RNA polymerase I.</title>
        <authorList>
            <person name="Jansa P."/>
            <person name="Burek C."/>
            <person name="Sander E.E."/>
            <person name="Grummt I."/>
        </authorList>
    </citation>
    <scope>FUNCTION</scope>
    <scope>PHOSPHORYLATION</scope>
</reference>
<reference key="8">
    <citation type="journal article" date="2005" name="Nat. Biotechnol.">
        <title>Immunoaffinity profiling of tyrosine phosphorylation in cancer cells.</title>
        <authorList>
            <person name="Rush J."/>
            <person name="Moritz A."/>
            <person name="Lee K.A."/>
            <person name="Guo A."/>
            <person name="Goss V.L."/>
            <person name="Spek E.J."/>
            <person name="Zhang H."/>
            <person name="Zha X.-M."/>
            <person name="Polakiewicz R.D."/>
            <person name="Comb M.J."/>
        </authorList>
    </citation>
    <scope>PHOSPHORYLATION [LARGE SCALE ANALYSIS] AT TYR-310</scope>
    <scope>IDENTIFICATION BY MASS SPECTROMETRY [LARGE SCALE ANALYSIS]</scope>
</reference>
<reference key="9">
    <citation type="journal article" date="2007" name="Proc. Natl. Acad. Sci. U.S.A.">
        <title>Large-scale phosphorylation analysis of mouse liver.</title>
        <authorList>
            <person name="Villen J."/>
            <person name="Beausoleil S.A."/>
            <person name="Gerber S.A."/>
            <person name="Gygi S.P."/>
        </authorList>
    </citation>
    <scope>PHOSPHORYLATION [LARGE SCALE ANALYSIS] AT SER-42</scope>
    <scope>IDENTIFICATION BY MASS SPECTROMETRY [LARGE SCALE ANALYSIS]</scope>
    <source>
        <tissue>Liver</tissue>
    </source>
</reference>
<reference key="10">
    <citation type="journal article" date="2008" name="Cell">
        <title>PTRF-Cavin, a conserved cytoplasmic protein required for caveola formation and function.</title>
        <authorList>
            <person name="Hill M.M."/>
            <person name="Bastiani M."/>
            <person name="Luetterforst R."/>
            <person name="Kirkham M."/>
            <person name="Kirkham A."/>
            <person name="Nixon S.J."/>
            <person name="Walser P."/>
            <person name="Abankwa D."/>
            <person name="Oorschot V.M."/>
            <person name="Martin S."/>
            <person name="Hancock J.F."/>
            <person name="Parton R.G."/>
        </authorList>
    </citation>
    <scope>IDENTIFICATION BY MASS SPECTROMETRY</scope>
    <scope>FUNCTION</scope>
    <scope>SUBCELLULAR LOCATION</scope>
    <scope>TISSUE SPECIFICITY</scope>
</reference>
<reference key="11">
    <citation type="journal article" date="2008" name="Cell Metab.">
        <title>Deletion of Cavin/PTRF causes global loss of caveolae, dyslipidemia, and glucose intolerance.</title>
        <authorList>
            <person name="Liu L."/>
            <person name="Brown D."/>
            <person name="McKee M."/>
            <person name="Lebrasseur N.K."/>
            <person name="Yang D."/>
            <person name="Albrecht K.H."/>
            <person name="Ravid K."/>
            <person name="Pilch P.F."/>
        </authorList>
    </citation>
    <scope>FUNCTION</scope>
    <scope>DISRUPTION PHENOTYPE</scope>
</reference>
<reference key="12">
    <citation type="journal article" date="2008" name="J. Biol. Chem.">
        <title>A critical role of cavin (polymerase I and transcript release factor) in caveolae formation and organization.</title>
        <authorList>
            <person name="Liu L."/>
            <person name="Pilch P.F."/>
        </authorList>
    </citation>
    <scope>FUNCTION</scope>
    <scope>SUBCELLULAR LOCATION</scope>
</reference>
<reference key="13">
    <citation type="journal article" date="2009" name="J. Cell Biol.">
        <title>MURC/Cavin-4 and cavin family members form tissue-specific caveolar complexes.</title>
        <authorList>
            <person name="Bastiani M."/>
            <person name="Liu L."/>
            <person name="Hill M.M."/>
            <person name="Jedrychowski M.P."/>
            <person name="Nixon S.J."/>
            <person name="Lo H.P."/>
            <person name="Abankwa D."/>
            <person name="Luetterforst R."/>
            <person name="Fernandez-Rojo M."/>
            <person name="Breen M.R."/>
            <person name="Gygi S.P."/>
            <person name="Vinten J."/>
            <person name="Walser P.J."/>
            <person name="North K.N."/>
            <person name="Hancock J.F."/>
            <person name="Pilch P.F."/>
            <person name="Parton R.G."/>
        </authorList>
    </citation>
    <scope>FUNCTION</scope>
    <scope>IDENTIFICATION IN THE CAVIN COMPLEX</scope>
    <scope>INTERACTION WITH CAV1; CAVIN2; CAVIN3 AND CAVIN4</scope>
    <scope>TISSUE SPECIFICITY</scope>
    <scope>SUBCELLULAR LOCATION</scope>
</reference>
<reference key="14">
    <citation type="journal article" date="2009" name="Mol. Cell. Proteomics">
        <title>Large scale localization of protein phosphorylation by use of electron capture dissociation mass spectrometry.</title>
        <authorList>
            <person name="Sweet S.M."/>
            <person name="Bailey C.M."/>
            <person name="Cunningham D.L."/>
            <person name="Heath J.K."/>
            <person name="Cooper H.J."/>
        </authorList>
    </citation>
    <scope>PHOSPHORYLATION [LARGE SCALE ANALYSIS] AT SER-169 AND SER-302</scope>
    <scope>IDENTIFICATION BY MASS SPECTROMETRY [LARGE SCALE ANALYSIS]</scope>
    <source>
        <tissue>Embryonic fibroblast</tissue>
    </source>
</reference>
<reference key="15">
    <citation type="journal article" date="2010" name="Cell">
        <title>A tissue-specific atlas of mouse protein phosphorylation and expression.</title>
        <authorList>
            <person name="Huttlin E.L."/>
            <person name="Jedrychowski M.P."/>
            <person name="Elias J.E."/>
            <person name="Goswami T."/>
            <person name="Rad R."/>
            <person name="Beausoleil S.A."/>
            <person name="Villen J."/>
            <person name="Haas W."/>
            <person name="Sowa M.E."/>
            <person name="Gygi S.P."/>
        </authorList>
    </citation>
    <scope>PHOSPHORYLATION [LARGE SCALE ANALYSIS] AT SER-38; THR-40; SER-42; SER-169; SER-171; SER-173; THR-198; SER-204; SER-205; TYR-310 AND SER-391</scope>
    <scope>IDENTIFICATION BY MASS SPECTROMETRY [LARGE SCALE ANALYSIS]</scope>
    <source>
        <tissue>Brain</tissue>
        <tissue>Brown adipose tissue</tissue>
        <tissue>Heart</tissue>
        <tissue>Kidney</tissue>
        <tissue>Lung</tissue>
        <tissue>Pancreas</tissue>
        <tissue>Spleen</tissue>
        <tissue>Testis</tissue>
    </source>
</reference>
<reference key="16">
    <citation type="journal article" date="2013" name="Nat. Commun.">
        <title>Deletion of cavin genes reveals tissue-specific mechanisms for morphogenesis of endothelial caveolae.</title>
        <authorList>
            <person name="Hansen C.G."/>
            <person name="Shvets E."/>
            <person name="Howard G."/>
            <person name="Riento K."/>
            <person name="Nichols B.J."/>
        </authorList>
    </citation>
    <scope>FUNCTION</scope>
    <scope>TISSUE SPECIFICITY</scope>
</reference>
<reference key="17">
    <citation type="journal article" date="2015" name="Biochem. Biophys. Res. Commun.">
        <title>The N-terminal leucine-zipper motif in PTRF/cavin-1 is essential and sufficient for its caveolae-association.</title>
        <authorList>
            <person name="Wei Z."/>
            <person name="Zou X."/>
            <person name="Wang H."/>
            <person name="Lei J."/>
            <person name="Wu Y."/>
            <person name="Liao K."/>
        </authorList>
    </citation>
    <scope>DOMAIN LEUCINE ZIPPER</scope>
    <scope>SUBCELLULAR LOCATION</scope>
    <scope>NUCLEAR LOCALIZATION SIGNAL</scope>
    <scope>PHOSPHORYLATION AT SER-389 AND SER-391</scope>
    <scope>MUTAGENESIS OF SER-389 AND SER-391</scope>
</reference>
<reference key="18">
    <citation type="journal article" date="2015" name="J. Cell Sci.">
        <title>Cavin3 interacts with cavin1 and caveolin1 to increase surface dynamics of caveolae.</title>
        <authorList>
            <person name="Mohan J."/>
            <person name="Moren B."/>
            <person name="Larsson E."/>
            <person name="Holst M.R."/>
            <person name="Lundmark R."/>
        </authorList>
    </citation>
    <scope>INTERACTION WITH CAV1; CAVIN2 AND CAVIN3</scope>
    <scope>SUBUNIT</scope>
</reference>
<reference key="19">
    <citation type="journal article" date="2016" name="Elife">
        <title>PTRF/Cavin-1 promotes efficient ribosomal RNA transcription in response to metabolic challenges.</title>
        <authorList>
            <person name="Liu L."/>
            <person name="Pilch P.F."/>
        </authorList>
    </citation>
    <scope>FUNCTION</scope>
    <scope>SUBCELLULAR LOCATION</scope>
    <scope>INTERACTION WITH TTF1</scope>
    <scope>PHOSPHORYLATION AT TYR-158</scope>
    <scope>MUTAGENESIS OF TYR-158</scope>
    <scope>NUCLEAR EXPORT SIGNAL</scope>
    <scope>UBIQUITINATION</scope>
</reference>
<reference key="20">
    <citation type="journal article" date="2018" name="Acta Biochim. Biophys. Sin.">
        <title>Fam198a, a member of secreted kinase, secrets through caveolae biogenesis pathway.</title>
        <authorList>
            <person name="Wei Z."/>
            <person name="Liu T."/>
            <person name="Lei J."/>
            <person name="Wu Y."/>
            <person name="Wang S."/>
            <person name="Liao K."/>
        </authorList>
    </citation>
    <scope>FUNCTION</scope>
    <scope>SUBCELLULAR LOCATION</scope>
</reference>